<name>GEDH_ASPTN</name>
<organism>
    <name type="scientific">Aspergillus terreus (strain NIH 2624 / FGSC A1156)</name>
    <dbReference type="NCBI Taxonomy" id="341663"/>
    <lineage>
        <taxon>Eukaryota</taxon>
        <taxon>Fungi</taxon>
        <taxon>Dikarya</taxon>
        <taxon>Ascomycota</taxon>
        <taxon>Pezizomycotina</taxon>
        <taxon>Eurotiomycetes</taxon>
        <taxon>Eurotiomycetidae</taxon>
        <taxon>Eurotiales</taxon>
        <taxon>Aspergillaceae</taxon>
        <taxon>Aspergillus</taxon>
        <taxon>Aspergillus subgen. Circumdati</taxon>
    </lineage>
</organism>
<dbReference type="EC" id="1.10.3.-" evidence="4"/>
<dbReference type="EMBL" id="CH476605">
    <property type="protein sequence ID" value="EAU31630.1"/>
    <property type="status" value="ALT_SEQ"/>
    <property type="molecule type" value="Genomic_DNA"/>
</dbReference>
<dbReference type="SMR" id="P0DOB2"/>
<dbReference type="STRING" id="341663.P0DOB2"/>
<dbReference type="BioCyc" id="MetaCyc:MONOMER-21291"/>
<dbReference type="Proteomes" id="UP000007963">
    <property type="component" value="Unassembled WGS sequence"/>
</dbReference>
<dbReference type="GO" id="GO:0016020">
    <property type="term" value="C:membrane"/>
    <property type="evidence" value="ECO:0007669"/>
    <property type="project" value="UniProtKB-SubCell"/>
</dbReference>
<dbReference type="GO" id="GO:0004497">
    <property type="term" value="F:monooxygenase activity"/>
    <property type="evidence" value="ECO:0007669"/>
    <property type="project" value="UniProtKB-KW"/>
</dbReference>
<dbReference type="InterPro" id="IPR013901">
    <property type="entry name" value="Anthrone_oxy"/>
</dbReference>
<dbReference type="PANTHER" id="PTHR35042">
    <property type="entry name" value="ANTHRONE OXYGENASE ENCC"/>
    <property type="match status" value="1"/>
</dbReference>
<dbReference type="PANTHER" id="PTHR35042:SF3">
    <property type="entry name" value="ANTHRONE OXYGENASE-RELATED"/>
    <property type="match status" value="1"/>
</dbReference>
<dbReference type="Pfam" id="PF08592">
    <property type="entry name" value="Anthrone_oxy"/>
    <property type="match status" value="1"/>
</dbReference>
<comment type="function">
    <text evidence="2 3 4 5 6 7 8">Anthrone oxygenase; part of the gene cluster that mediates the biosynthesis of geodin, an intermediate in the biosynthesis of other natural products (PubMed:19549600, PubMed:24009710, PubMed:7665560). The pathway begins with the synthesis of atrochrysone thioester by the polyketide synthase (PKS) gedC (PubMed:12536215, PubMed:19549600). The atrochrysone carboxyl ACP thioesterase gedB then breaks the thioester bond and releases the atrochrysone carboxylic acid from gedC (PubMed:19549600). The atrochrysone carboxylic acid is then converted to atrochrysone which is further transformed into emodin anthrone (PubMed:24009710). The next step is performed by the emodin anthrone oxygenase gedH that catalyzes the oxidation of emodinanthrone to emodin (PubMed:1810248). Emodin O-methyltransferase encoded probably by gedA then catalyzes methylation of the 8-hydroxy group of emodin to form questin (PubMed:1444712). Ring cleavage of questin by questin oxidase gedK leads to desmethylsulochrin via several intermediates including questin epoxide (PubMed:3182756). Another methylation step probably catalyzed by methyltransferase gedG leads to the formation of sulochrin which is further converted to dihydrogeodin by the sulochrin halogenase gedL (PubMed:24009710). Finally, the dihydrogeodin oxidase gedJ catalyzes the stereospecific phenol oxidative coupling reaction converting dihydrogeodin to geodin (PubMed:7665560).</text>
</comment>
<comment type="catalytic activity">
    <reaction evidence="4">
        <text>emodin anthrone + O2 = emodin + H2O + H(+)</text>
        <dbReference type="Rhea" id="RHEA:64268"/>
        <dbReference type="ChEBI" id="CHEBI:15377"/>
        <dbReference type="ChEBI" id="CHEBI:15378"/>
        <dbReference type="ChEBI" id="CHEBI:15379"/>
        <dbReference type="ChEBI" id="CHEBI:77659"/>
        <dbReference type="ChEBI" id="CHEBI:150013"/>
    </reaction>
    <physiologicalReaction direction="left-to-right" evidence="4">
        <dbReference type="Rhea" id="RHEA:64269"/>
    </physiologicalReaction>
</comment>
<comment type="pathway">
    <text evidence="6">Secondary metabolite biosynthesis.</text>
</comment>
<comment type="subcellular location">
    <subcellularLocation>
        <location evidence="1">Membrane</location>
        <topology evidence="1">Multi-pass membrane protein</topology>
    </subcellularLocation>
</comment>
<comment type="similarity">
    <text evidence="11">Belongs to the anthrone oxygenase family.</text>
</comment>
<comment type="sequence caution" evidence="6">
    <conflict type="erroneous gene model prediction">
        <sequence resource="EMBL-CDS" id="EAU31630"/>
    </conflict>
    <text>The predicted gene ATEG_08457 has been split into 2 genes: ATEG_08457-1 and ATEG_08457-2.</text>
</comment>
<comment type="sequence caution" evidence="11">
    <conflict type="erroneous translation">
        <sequence resource="EMBL-CDS" id="EAU31630"/>
    </conflict>
</comment>
<proteinExistence type="evidence at protein level"/>
<evidence type="ECO:0000255" key="1"/>
<evidence type="ECO:0000269" key="2">
    <source>
    </source>
</evidence>
<evidence type="ECO:0000269" key="3">
    <source>
    </source>
</evidence>
<evidence type="ECO:0000269" key="4">
    <source>
    </source>
</evidence>
<evidence type="ECO:0000269" key="5">
    <source>
    </source>
</evidence>
<evidence type="ECO:0000269" key="6">
    <source>
    </source>
</evidence>
<evidence type="ECO:0000269" key="7">
    <source>
    </source>
</evidence>
<evidence type="ECO:0000269" key="8">
    <source>
    </source>
</evidence>
<evidence type="ECO:0000303" key="9">
    <source>
    </source>
</evidence>
<evidence type="ECO:0000303" key="10">
    <source>
    </source>
</evidence>
<evidence type="ECO:0000305" key="11"/>
<sequence length="150" mass="16271">MANPAVGAMMGLSLVAVPVFLDTNTQSEQLLAQFASLYDYGHKLMPTIAVATCALHGWVAARKRAAHQPWGRPVLAAVTTITMVPFTWVCMVSTNNALFQLHKGADANMEMVRALIARWQWLHVARSLFPLAGAIVACQTLLKELVGGSR</sequence>
<protein>
    <recommendedName>
        <fullName evidence="9">Anthrone oxygenase gedH</fullName>
        <ecNumber evidence="4">1.10.3.-</ecNumber>
    </recommendedName>
    <alternativeName>
        <fullName evidence="10">Geodin synthesis protein H</fullName>
    </alternativeName>
</protein>
<reference key="1">
    <citation type="submission" date="2005-09" db="EMBL/GenBank/DDBJ databases">
        <title>Annotation of the Aspergillus terreus NIH2624 genome.</title>
        <authorList>
            <person name="Birren B.W."/>
            <person name="Lander E.S."/>
            <person name="Galagan J.E."/>
            <person name="Nusbaum C."/>
            <person name="Devon K."/>
            <person name="Henn M."/>
            <person name="Ma L.-J."/>
            <person name="Jaffe D.B."/>
            <person name="Butler J."/>
            <person name="Alvarez P."/>
            <person name="Gnerre S."/>
            <person name="Grabherr M."/>
            <person name="Kleber M."/>
            <person name="Mauceli E.W."/>
            <person name="Brockman W."/>
            <person name="Rounsley S."/>
            <person name="Young S.K."/>
            <person name="LaButti K."/>
            <person name="Pushparaj V."/>
            <person name="DeCaprio D."/>
            <person name="Crawford M."/>
            <person name="Koehrsen M."/>
            <person name="Engels R."/>
            <person name="Montgomery P."/>
            <person name="Pearson M."/>
            <person name="Howarth C."/>
            <person name="Larson L."/>
            <person name="Luoma S."/>
            <person name="White J."/>
            <person name="Alvarado L."/>
            <person name="Kodira C.D."/>
            <person name="Zeng Q."/>
            <person name="Oleary S."/>
            <person name="Yandava C."/>
            <person name="Denning D.W."/>
            <person name="Nierman W.C."/>
            <person name="Milne T."/>
            <person name="Madden K."/>
        </authorList>
    </citation>
    <scope>NUCLEOTIDE SEQUENCE [LARGE SCALE GENOMIC DNA]</scope>
    <source>
        <strain>NIH 2624 / FGSC A1156</strain>
    </source>
</reference>
<reference key="2">
    <citation type="journal article" date="1988" name="J. Biochem.">
        <title>A novel anthraquinone ring cleavage enzyme from Aspergillus terreus.</title>
        <authorList>
            <person name="Fujii I."/>
            <person name="Ebizuka Y."/>
            <person name="Sankawa U."/>
        </authorList>
    </citation>
    <scope>FUNCTION</scope>
</reference>
<reference key="3">
    <citation type="journal article" date="1991" name="Biochem. Int.">
        <title>Identification of emodinanthrone oxygenase in fungus Aspergillus terreus.</title>
        <authorList>
            <person name="Fujii I."/>
            <person name="Chen Z.G."/>
            <person name="Ebizuka Y."/>
            <person name="Sankawa U."/>
        </authorList>
    </citation>
    <scope>FUNCTION</scope>
    <scope>CATALYTIC ACTIVITY</scope>
</reference>
<reference key="4">
    <citation type="journal article" date="1992" name="Arch. Microbiol.">
        <title>Emodin O-methyltransferase from Aspergillus terreus.</title>
        <authorList>
            <person name="Chen Z.G."/>
            <person name="Fujii I."/>
            <person name="Ebizuka Y."/>
            <person name="Sankawa U."/>
        </authorList>
    </citation>
    <scope>FUNCTION</scope>
</reference>
<reference key="5">
    <citation type="journal article" date="1995" name="J. Biol. Chem.">
        <title>Molecular cloning and heterologous expression of the gene encoding dihydrogeodin oxidase, a multicopper blue enzyme from Aspergillus terreus.</title>
        <authorList>
            <person name="Huang K.X."/>
            <person name="Fujii I."/>
            <person name="Ebizuka Y."/>
            <person name="Gomi K."/>
            <person name="Sankawa U."/>
        </authorList>
    </citation>
    <scope>FUNCTION</scope>
</reference>
<reference key="6">
    <citation type="journal article" date="2003" name="Nat. Biotechnol.">
        <title>Integrating transcriptional and metabolite profiles to direct the engineering of lovastatin-producing fungal strains.</title>
        <authorList>
            <person name="Askenazi M."/>
            <person name="Driggers E.M."/>
            <person name="Holtzman D.A."/>
            <person name="Norman T.C."/>
            <person name="Iverson S."/>
            <person name="Zimmer D.P."/>
            <person name="Boers M.E."/>
            <person name="Blomquist P.R."/>
            <person name="Martinez E.J."/>
            <person name="Monreal A.W."/>
            <person name="Feibelman T.P."/>
            <person name="Mayorga M.E."/>
            <person name="Maxon M.E."/>
            <person name="Sykes K."/>
            <person name="Tobin J.V."/>
            <person name="Cordero E."/>
            <person name="Salama S.R."/>
            <person name="Trueheart J."/>
            <person name="Royer J.C."/>
            <person name="Madden K.T."/>
        </authorList>
    </citation>
    <scope>FUNCTION</scope>
</reference>
<reference key="7">
    <citation type="journal article" date="2009" name="Chem. Biol.">
        <title>Physically discrete beta-lactamase-type thioesterase catalyzes product release in atrochrysone synthesis by iterative type I polyketide synthase.</title>
        <authorList>
            <person name="Awakawa T."/>
            <person name="Yokota K."/>
            <person name="Funa N."/>
            <person name="Doi F."/>
            <person name="Mori N."/>
            <person name="Watanabe H."/>
            <person name="Horinouchi S."/>
        </authorList>
    </citation>
    <scope>FUNCTION</scope>
</reference>
<reference key="8">
    <citation type="journal article" date="2013" name="PLoS ONE">
        <title>Heterologous reconstitution of the intact geodin gene cluster in Aspergillus nidulans through a simple and versatile PCR based approach.</title>
        <authorList>
            <person name="Nielsen M.T."/>
            <person name="Nielsen J.B."/>
            <person name="Anyaogu D.C."/>
            <person name="Holm D.K."/>
            <person name="Nielsen K.F."/>
            <person name="Larsen T.O."/>
            <person name="Mortensen U.H."/>
        </authorList>
    </citation>
    <scope>GENE MODEL REVISION</scope>
    <scope>FUNCTION</scope>
</reference>
<feature type="chain" id="PRO_0000437096" description="Anthrone oxygenase gedH">
    <location>
        <begin position="1"/>
        <end position="150"/>
    </location>
</feature>
<feature type="transmembrane region" description="Helical" evidence="1">
    <location>
        <begin position="1"/>
        <end position="21"/>
    </location>
</feature>
<feature type="transmembrane region" description="Helical" evidence="1">
    <location>
        <begin position="41"/>
        <end position="61"/>
    </location>
</feature>
<feature type="transmembrane region" description="Helical" evidence="1">
    <location>
        <begin position="73"/>
        <end position="93"/>
    </location>
</feature>
<feature type="transmembrane region" description="Helical" evidence="1">
    <location>
        <begin position="128"/>
        <end position="148"/>
    </location>
</feature>
<accession>P0DOB2</accession>
<accession>Q0CCX7</accession>
<gene>
    <name evidence="10" type="primary">gedH</name>
    <name evidence="10" type="ORF">ATEG_08457-2</name>
</gene>
<keyword id="KW-0472">Membrane</keyword>
<keyword id="KW-0503">Monooxygenase</keyword>
<keyword id="KW-0560">Oxidoreductase</keyword>
<keyword id="KW-1185">Reference proteome</keyword>
<keyword id="KW-0812">Transmembrane</keyword>
<keyword id="KW-1133">Transmembrane helix</keyword>